<keyword id="KW-0963">Cytoplasm</keyword>
<keyword id="KW-0269">Exonuclease</keyword>
<keyword id="KW-0378">Hydrolase</keyword>
<keyword id="KW-0540">Nuclease</keyword>
<keyword id="KW-1185">Reference proteome</keyword>
<keyword id="KW-0694">RNA-binding</keyword>
<gene>
    <name evidence="2" type="primary">rnr</name>
    <name type="synonym">vacB</name>
    <name type="ordered locus">MYPU_3510</name>
</gene>
<organism>
    <name type="scientific">Mycoplasmopsis pulmonis (strain UAB CTIP)</name>
    <name type="common">Mycoplasma pulmonis</name>
    <dbReference type="NCBI Taxonomy" id="272635"/>
    <lineage>
        <taxon>Bacteria</taxon>
        <taxon>Bacillati</taxon>
        <taxon>Mycoplasmatota</taxon>
        <taxon>Mycoplasmoidales</taxon>
        <taxon>Metamycoplasmataceae</taxon>
        <taxon>Mycoplasmopsis</taxon>
    </lineage>
</organism>
<reference key="1">
    <citation type="journal article" date="2001" name="Nucleic Acids Res.">
        <title>The complete genome sequence of the murine respiratory pathogen Mycoplasma pulmonis.</title>
        <authorList>
            <person name="Chambaud I."/>
            <person name="Heilig R."/>
            <person name="Ferris S."/>
            <person name="Barbe V."/>
            <person name="Samson D."/>
            <person name="Galisson F."/>
            <person name="Moszer I."/>
            <person name="Dybvig K."/>
            <person name="Wroblewski H."/>
            <person name="Viari A."/>
            <person name="Rocha E.P.C."/>
            <person name="Blanchard A."/>
        </authorList>
    </citation>
    <scope>NUCLEOTIDE SEQUENCE [LARGE SCALE GENOMIC DNA]</scope>
    <source>
        <strain>UAB CTIP</strain>
    </source>
</reference>
<sequence>MKNLVLQNLKSNKAYSFLEIARINKINPNFNSQLSKALFSLLDQGLIVKNNDGNFIKVNEIKKIQGIFKQSNRNFAFIETADEQSYFVAKAHFNGAINSFEVEAIVYESPFEKDKKYAVVKKILKNTHPEIIGFIKISNGIKYFNAFEESFRSYKFFVDQNIDVEEDDVILVVVEKIVDQKIYVNFVKKVSTLKSNFYQIDIVLEKSKTIIDFPEDVLDESALIEDHVIEKDYQNRKDLRDKLIITIDGEDTKDFDDAIYVEKNKDHFLLSVHIADVAHYVKENSAIDKEALRRATSIYLPHMVIPMLPEKLSNGICSLNPGVDRLVMSIDIFIDFQGNTIKTELYEGIINSKHRLTYNQVNDFYNNKIKLDPNLEKMLNDSLELSKILENYKKDEGYINLEIEESKVILDKEGKTVGIKVIQRGLSEVLIENFMVRANEAVAWKMNKLKLPSIYRVHDNPSIESLVLFEKTLKTLGIDFDTPKITSPKAFSDSFEKIKQNYQIDNFVKLMVLRTMEKAIYSDKNIGHFGLASSYYSHFTSPIRRYPDLQLHRLIKQMVFDKSNLKEKKNHFSLILSDVSVQSSKKEVEAVSIERQINDIKKAEYYESKIGKSLKAQIVSILSFGMFVEFEDKVSGLIHISNLLGEDFQVSEDGLLISSNKTKYKLGQEIDVVVVKVDKNLGKVDVVLEKDYQEYLKKEQAFQAFKKNKFTQDKEKQNGKINYKK</sequence>
<evidence type="ECO:0000255" key="1"/>
<evidence type="ECO:0000255" key="2">
    <source>
        <dbReference type="HAMAP-Rule" id="MF_01895"/>
    </source>
</evidence>
<feature type="chain" id="PRO_0000166410" description="Ribonuclease R">
    <location>
        <begin position="1"/>
        <end position="725"/>
    </location>
</feature>
<feature type="domain" description="RNB" evidence="1">
    <location>
        <begin position="236"/>
        <end position="559"/>
    </location>
</feature>
<feature type="domain" description="S1 motif" evidence="2">
    <location>
        <begin position="611"/>
        <end position="689"/>
    </location>
</feature>
<protein>
    <recommendedName>
        <fullName evidence="2">Ribonuclease R</fullName>
        <shortName evidence="2">RNase R</shortName>
        <ecNumber evidence="2">3.1.13.1</ecNumber>
    </recommendedName>
    <alternativeName>
        <fullName>VacB protein homolog</fullName>
    </alternativeName>
</protein>
<proteinExistence type="inferred from homology"/>
<accession>Q98QL0</accession>
<dbReference type="EC" id="3.1.13.1" evidence="2"/>
<dbReference type="EMBL" id="AL445564">
    <property type="protein sequence ID" value="CAC13524.1"/>
    <property type="molecule type" value="Genomic_DNA"/>
</dbReference>
<dbReference type="PIR" id="G90555">
    <property type="entry name" value="G90555"/>
</dbReference>
<dbReference type="RefSeq" id="WP_010925155.1">
    <property type="nucleotide sequence ID" value="NC_002771.1"/>
</dbReference>
<dbReference type="SMR" id="Q98QL0"/>
<dbReference type="STRING" id="272635.gene:17576942"/>
<dbReference type="KEGG" id="mpu:MYPU_3510"/>
<dbReference type="eggNOG" id="COG0557">
    <property type="taxonomic scope" value="Bacteria"/>
</dbReference>
<dbReference type="HOGENOM" id="CLU_002333_7_3_14"/>
<dbReference type="BioCyc" id="MPUL272635:G1GT6-351-MONOMER"/>
<dbReference type="Proteomes" id="UP000000528">
    <property type="component" value="Chromosome"/>
</dbReference>
<dbReference type="GO" id="GO:0005829">
    <property type="term" value="C:cytosol"/>
    <property type="evidence" value="ECO:0007669"/>
    <property type="project" value="TreeGrafter"/>
</dbReference>
<dbReference type="GO" id="GO:0008859">
    <property type="term" value="F:exoribonuclease II activity"/>
    <property type="evidence" value="ECO:0007669"/>
    <property type="project" value="UniProtKB-UniRule"/>
</dbReference>
<dbReference type="GO" id="GO:0003723">
    <property type="term" value="F:RNA binding"/>
    <property type="evidence" value="ECO:0007669"/>
    <property type="project" value="UniProtKB-UniRule"/>
</dbReference>
<dbReference type="GO" id="GO:0006402">
    <property type="term" value="P:mRNA catabolic process"/>
    <property type="evidence" value="ECO:0007669"/>
    <property type="project" value="TreeGrafter"/>
</dbReference>
<dbReference type="Gene3D" id="2.40.50.140">
    <property type="entry name" value="Nucleic acid-binding proteins"/>
    <property type="match status" value="2"/>
</dbReference>
<dbReference type="HAMAP" id="MF_01895">
    <property type="entry name" value="RNase_R"/>
    <property type="match status" value="1"/>
</dbReference>
<dbReference type="InterPro" id="IPR012340">
    <property type="entry name" value="NA-bd_OB-fold"/>
</dbReference>
<dbReference type="InterPro" id="IPR001900">
    <property type="entry name" value="RNase_II/R"/>
</dbReference>
<dbReference type="InterPro" id="IPR022966">
    <property type="entry name" value="RNase_II/R_CS"/>
</dbReference>
<dbReference type="InterPro" id="IPR004476">
    <property type="entry name" value="RNase_II/RNase_R"/>
</dbReference>
<dbReference type="InterPro" id="IPR011805">
    <property type="entry name" value="RNase_R"/>
</dbReference>
<dbReference type="InterPro" id="IPR050180">
    <property type="entry name" value="RNR_Ribonuclease"/>
</dbReference>
<dbReference type="InterPro" id="IPR003029">
    <property type="entry name" value="S1_domain"/>
</dbReference>
<dbReference type="NCBIfam" id="TIGR00358">
    <property type="entry name" value="3_prime_RNase"/>
    <property type="match status" value="1"/>
</dbReference>
<dbReference type="NCBIfam" id="TIGR02063">
    <property type="entry name" value="RNase_R"/>
    <property type="match status" value="1"/>
</dbReference>
<dbReference type="PANTHER" id="PTHR23355:SF9">
    <property type="entry name" value="DIS3-LIKE EXONUCLEASE 2"/>
    <property type="match status" value="1"/>
</dbReference>
<dbReference type="PANTHER" id="PTHR23355">
    <property type="entry name" value="RIBONUCLEASE"/>
    <property type="match status" value="1"/>
</dbReference>
<dbReference type="Pfam" id="PF00773">
    <property type="entry name" value="RNB"/>
    <property type="match status" value="1"/>
</dbReference>
<dbReference type="Pfam" id="PF00575">
    <property type="entry name" value="S1"/>
    <property type="match status" value="1"/>
</dbReference>
<dbReference type="SMART" id="SM00955">
    <property type="entry name" value="RNB"/>
    <property type="match status" value="1"/>
</dbReference>
<dbReference type="SMART" id="SM00316">
    <property type="entry name" value="S1"/>
    <property type="match status" value="1"/>
</dbReference>
<dbReference type="SUPFAM" id="SSF50249">
    <property type="entry name" value="Nucleic acid-binding proteins"/>
    <property type="match status" value="3"/>
</dbReference>
<dbReference type="PROSITE" id="PS01175">
    <property type="entry name" value="RIBONUCLEASE_II"/>
    <property type="match status" value="1"/>
</dbReference>
<dbReference type="PROSITE" id="PS50126">
    <property type="entry name" value="S1"/>
    <property type="match status" value="1"/>
</dbReference>
<comment type="function">
    <text evidence="2">3'-5' exoribonuclease that releases 5'-nucleoside monophosphates and is involved in maturation of structured RNAs.</text>
</comment>
<comment type="catalytic activity">
    <reaction evidence="2">
        <text>Exonucleolytic cleavage in the 3'- to 5'-direction to yield nucleoside 5'-phosphates.</text>
        <dbReference type="EC" id="3.1.13.1"/>
    </reaction>
</comment>
<comment type="subcellular location">
    <subcellularLocation>
        <location evidence="2">Cytoplasm</location>
    </subcellularLocation>
</comment>
<comment type="similarity">
    <text evidence="2">Belongs to the RNR ribonuclease family. RNase R subfamily.</text>
</comment>
<name>RNR_MYCPU</name>